<protein>
    <recommendedName>
        <fullName evidence="1">Formate--tetrahydrofolate ligase 2</fullName>
        <ecNumber evidence="1">6.3.4.3</ecNumber>
    </recommendedName>
    <alternativeName>
        <fullName evidence="1">Formyltetrahydrofolate synthetase 2</fullName>
        <shortName evidence="1">FHS 2</shortName>
        <shortName evidence="1">FTHFS 2</shortName>
    </alternativeName>
</protein>
<organism>
    <name type="scientific">Desulfitobacterium hafniense (strain Y51)</name>
    <dbReference type="NCBI Taxonomy" id="138119"/>
    <lineage>
        <taxon>Bacteria</taxon>
        <taxon>Bacillati</taxon>
        <taxon>Bacillota</taxon>
        <taxon>Clostridia</taxon>
        <taxon>Eubacteriales</taxon>
        <taxon>Desulfitobacteriaceae</taxon>
        <taxon>Desulfitobacterium</taxon>
    </lineage>
</organism>
<proteinExistence type="inferred from homology"/>
<comment type="catalytic activity">
    <reaction evidence="1">
        <text>(6S)-5,6,7,8-tetrahydrofolate + formate + ATP = (6R)-10-formyltetrahydrofolate + ADP + phosphate</text>
        <dbReference type="Rhea" id="RHEA:20221"/>
        <dbReference type="ChEBI" id="CHEBI:15740"/>
        <dbReference type="ChEBI" id="CHEBI:30616"/>
        <dbReference type="ChEBI" id="CHEBI:43474"/>
        <dbReference type="ChEBI" id="CHEBI:57453"/>
        <dbReference type="ChEBI" id="CHEBI:195366"/>
        <dbReference type="ChEBI" id="CHEBI:456216"/>
        <dbReference type="EC" id="6.3.4.3"/>
    </reaction>
</comment>
<comment type="pathway">
    <text evidence="1">One-carbon metabolism; tetrahydrofolate interconversion.</text>
</comment>
<comment type="similarity">
    <text evidence="1">Belongs to the formate--tetrahydrofolate ligase family.</text>
</comment>
<sequence>MAFKSDIEIAQESTMLPVAELAEKLNIAEEYVESYGKYKAKIDYNLLKEKGNTPDGKLILVTAINPTPAGEGKTTTTVGLGDALTHLGKKVVIALREPSLGPVFGVKGGAAGGGYAQVVPMEDINLHFTGDLHAIGAANNLIAALLDNHIYQGNALDIDVRRITWKRCMDMNDRQLRYINDGLGGKANGMPREDGFDITVASEIMAILCLSSDLDDLKQRVERIIVGYNRKGEPVTAGQLKAQGAVAALLKDALKPNLVQTLEHTPSFIHGGPFANIAHGCNSVMATKMALKLGDYVVTEAGFGADLGAEKFLDIKCRLSGLEPDAVVIVATVRALKSHGGVAKADLNQENLAALKEGLPNLLKHVENITVNFGLPAVVAINRFPTDTLAEVQLVEEECKKLGVNVALSEVWEKGGAGGVELAEEVLKLMDSPKNFTFAYDIDLGLKEKITAIATKIYGADGVDFIGSSTKDIEGIESIGYRNIPVCMAKTQYSLSDDQKKLGRPTGFRISIRSVKVSAGAGFAVALTGDIMTMPGLPKVPAAESIDVDNTGRISGLF</sequence>
<keyword id="KW-0067">ATP-binding</keyword>
<keyword id="KW-0436">Ligase</keyword>
<keyword id="KW-0547">Nucleotide-binding</keyword>
<keyword id="KW-0554">One-carbon metabolism</keyword>
<keyword id="KW-1185">Reference proteome</keyword>
<feature type="chain" id="PRO_0000293035" description="Formate--tetrahydrofolate ligase 2">
    <location>
        <begin position="1"/>
        <end position="558"/>
    </location>
</feature>
<feature type="binding site" evidence="1">
    <location>
        <begin position="67"/>
        <end position="74"/>
    </location>
    <ligand>
        <name>ATP</name>
        <dbReference type="ChEBI" id="CHEBI:30616"/>
    </ligand>
</feature>
<accession>Q24ZZ8</accession>
<evidence type="ECO:0000255" key="1">
    <source>
        <dbReference type="HAMAP-Rule" id="MF_01543"/>
    </source>
</evidence>
<name>FTHS2_DESHY</name>
<dbReference type="EC" id="6.3.4.3" evidence="1"/>
<dbReference type="EMBL" id="AP008230">
    <property type="protein sequence ID" value="BAE82394.1"/>
    <property type="molecule type" value="Genomic_DNA"/>
</dbReference>
<dbReference type="RefSeq" id="WP_005809880.1">
    <property type="nucleotide sequence ID" value="NC_007907.1"/>
</dbReference>
<dbReference type="SMR" id="Q24ZZ8"/>
<dbReference type="STRING" id="138119.DSY0605"/>
<dbReference type="KEGG" id="dsy:DSY0605"/>
<dbReference type="eggNOG" id="COG2759">
    <property type="taxonomic scope" value="Bacteria"/>
</dbReference>
<dbReference type="HOGENOM" id="CLU_003601_3_3_9"/>
<dbReference type="UniPathway" id="UPA00193"/>
<dbReference type="Proteomes" id="UP000001946">
    <property type="component" value="Chromosome"/>
</dbReference>
<dbReference type="GO" id="GO:0005524">
    <property type="term" value="F:ATP binding"/>
    <property type="evidence" value="ECO:0007669"/>
    <property type="project" value="UniProtKB-UniRule"/>
</dbReference>
<dbReference type="GO" id="GO:0004329">
    <property type="term" value="F:formate-tetrahydrofolate ligase activity"/>
    <property type="evidence" value="ECO:0007669"/>
    <property type="project" value="UniProtKB-UniRule"/>
</dbReference>
<dbReference type="GO" id="GO:0035999">
    <property type="term" value="P:tetrahydrofolate interconversion"/>
    <property type="evidence" value="ECO:0007669"/>
    <property type="project" value="UniProtKB-UniRule"/>
</dbReference>
<dbReference type="CDD" id="cd00477">
    <property type="entry name" value="FTHFS"/>
    <property type="match status" value="1"/>
</dbReference>
<dbReference type="FunFam" id="3.30.1510.10:FF:000001">
    <property type="entry name" value="Formate--tetrahydrofolate ligase"/>
    <property type="match status" value="1"/>
</dbReference>
<dbReference type="FunFam" id="3.10.410.10:FF:000001">
    <property type="entry name" value="Putative formate--tetrahydrofolate ligase"/>
    <property type="match status" value="1"/>
</dbReference>
<dbReference type="Gene3D" id="3.30.1510.10">
    <property type="entry name" value="Domain 2, N(10)-formyltetrahydrofolate synthetase"/>
    <property type="match status" value="1"/>
</dbReference>
<dbReference type="Gene3D" id="3.10.410.10">
    <property type="entry name" value="Formyltetrahydrofolate synthetase, domain 3"/>
    <property type="match status" value="1"/>
</dbReference>
<dbReference type="Gene3D" id="3.40.50.300">
    <property type="entry name" value="P-loop containing nucleotide triphosphate hydrolases"/>
    <property type="match status" value="1"/>
</dbReference>
<dbReference type="HAMAP" id="MF_01543">
    <property type="entry name" value="FTHFS"/>
    <property type="match status" value="1"/>
</dbReference>
<dbReference type="InterPro" id="IPR000559">
    <property type="entry name" value="Formate_THF_ligase"/>
</dbReference>
<dbReference type="InterPro" id="IPR020628">
    <property type="entry name" value="Formate_THF_ligase_CS"/>
</dbReference>
<dbReference type="InterPro" id="IPR027417">
    <property type="entry name" value="P-loop_NTPase"/>
</dbReference>
<dbReference type="NCBIfam" id="NF010030">
    <property type="entry name" value="PRK13505.1"/>
    <property type="match status" value="1"/>
</dbReference>
<dbReference type="Pfam" id="PF01268">
    <property type="entry name" value="FTHFS"/>
    <property type="match status" value="1"/>
</dbReference>
<dbReference type="SUPFAM" id="SSF52540">
    <property type="entry name" value="P-loop containing nucleoside triphosphate hydrolases"/>
    <property type="match status" value="1"/>
</dbReference>
<dbReference type="PROSITE" id="PS00721">
    <property type="entry name" value="FTHFS_1"/>
    <property type="match status" value="1"/>
</dbReference>
<dbReference type="PROSITE" id="PS00722">
    <property type="entry name" value="FTHFS_2"/>
    <property type="match status" value="1"/>
</dbReference>
<gene>
    <name evidence="1" type="primary">fhs2</name>
    <name type="ordered locus">DSY0605</name>
</gene>
<reference key="1">
    <citation type="journal article" date="2006" name="J. Bacteriol.">
        <title>Complete genome sequence of the dehalorespiring bacterium Desulfitobacterium hafniense Y51 and comparison with Dehalococcoides ethenogenes 195.</title>
        <authorList>
            <person name="Nonaka H."/>
            <person name="Keresztes G."/>
            <person name="Shinoda Y."/>
            <person name="Ikenaga Y."/>
            <person name="Abe M."/>
            <person name="Naito K."/>
            <person name="Inatomi K."/>
            <person name="Furukawa K."/>
            <person name="Inui M."/>
            <person name="Yukawa H."/>
        </authorList>
    </citation>
    <scope>NUCLEOTIDE SEQUENCE [LARGE SCALE GENOMIC DNA]</scope>
    <source>
        <strain>Y51</strain>
    </source>
</reference>